<organism>
    <name type="scientific">Polytrichum commune</name>
    <name type="common">Haircap moss</name>
    <dbReference type="NCBI Taxonomy" id="3213"/>
    <lineage>
        <taxon>Eukaryota</taxon>
        <taxon>Viridiplantae</taxon>
        <taxon>Streptophyta</taxon>
        <taxon>Embryophyta</taxon>
        <taxon>Bryophyta</taxon>
        <taxon>Bryophytina</taxon>
        <taxon>Polytrichopsida</taxon>
        <taxon>Polytrichales</taxon>
        <taxon>Polytrichaceae</taxon>
        <taxon>Polytrichum</taxon>
    </lineage>
</organism>
<accession>P37852</accession>
<sequence length="100" mass="11573">KRLLQDLNIKINQVIPEGGSVQDLQNLPKAWFNLVPYREVGLMTAIYLEKNFGMPYISTTPMGIVDIAECIRQIQKHVNNLALNQTFNYESYIDQQTRFV</sequence>
<keyword id="KW-0004">4Fe-4S</keyword>
<keyword id="KW-0067">ATP-binding</keyword>
<keyword id="KW-0149">Chlorophyll biosynthesis</keyword>
<keyword id="KW-0150">Chloroplast</keyword>
<keyword id="KW-0408">Iron</keyword>
<keyword id="KW-0411">Iron-sulfur</keyword>
<keyword id="KW-0479">Metal-binding</keyword>
<keyword id="KW-0547">Nucleotide-binding</keyword>
<keyword id="KW-0560">Oxidoreductase</keyword>
<keyword id="KW-0602">Photosynthesis</keyword>
<keyword id="KW-0934">Plastid</keyword>
<reference key="1">
    <citation type="journal article" date="1996" name="Mol. Phylogenet. Evol.">
        <title>Phylogenetic inferences from chloroplast chlB gene sequences of Nephrolepis exaltata (Filicopsida), Ephedra altissima (Gnetopsida), and diverse land plants.</title>
        <authorList>
            <person name="Boivin R."/>
            <person name="Richard M."/>
            <person name="Beauseigle D."/>
            <person name="Bousquet J."/>
            <person name="Bellemare G."/>
        </authorList>
    </citation>
    <scope>NUCLEOTIDE SEQUENCE [GENOMIC DNA]</scope>
</reference>
<protein>
    <recommendedName>
        <fullName>Light-independent protochlorophyllide reductase subunit B</fullName>
        <shortName>DPOR subunit B</shortName>
        <shortName>LI-POR subunit B</shortName>
        <ecNumber>1.3.7.7</ecNumber>
    </recommendedName>
</protein>
<feature type="chain" id="PRO_0000219841" description="Light-independent protochlorophyllide reductase subunit B">
    <location>
        <begin position="1" status="less than"/>
        <end position="100" status="greater than"/>
    </location>
</feature>
<feature type="non-terminal residue">
    <location>
        <position position="1"/>
    </location>
</feature>
<feature type="non-terminal residue">
    <location>
        <position position="100"/>
    </location>
</feature>
<name>CHLB_POLCU</name>
<evidence type="ECO:0000250" key="1"/>
<evidence type="ECO:0000305" key="2"/>
<dbReference type="EC" id="1.3.7.7"/>
<dbReference type="EMBL" id="L25772">
    <property type="protein sequence ID" value="AAC37494.1"/>
    <property type="molecule type" value="Genomic_DNA"/>
</dbReference>
<dbReference type="SMR" id="P37852"/>
<dbReference type="UniPathway" id="UPA00670"/>
<dbReference type="GO" id="GO:0009507">
    <property type="term" value="C:chloroplast"/>
    <property type="evidence" value="ECO:0007669"/>
    <property type="project" value="UniProtKB-SubCell"/>
</dbReference>
<dbReference type="GO" id="GO:0051539">
    <property type="term" value="F:4 iron, 4 sulfur cluster binding"/>
    <property type="evidence" value="ECO:0007669"/>
    <property type="project" value="UniProtKB-KW"/>
</dbReference>
<dbReference type="GO" id="GO:0005524">
    <property type="term" value="F:ATP binding"/>
    <property type="evidence" value="ECO:0007669"/>
    <property type="project" value="UniProtKB-KW"/>
</dbReference>
<dbReference type="GO" id="GO:0046872">
    <property type="term" value="F:metal ion binding"/>
    <property type="evidence" value="ECO:0007669"/>
    <property type="project" value="UniProtKB-KW"/>
</dbReference>
<dbReference type="GO" id="GO:0016491">
    <property type="term" value="F:oxidoreductase activity"/>
    <property type="evidence" value="ECO:0007669"/>
    <property type="project" value="UniProtKB-KW"/>
</dbReference>
<dbReference type="GO" id="GO:0036068">
    <property type="term" value="P:light-independent chlorophyll biosynthetic process"/>
    <property type="evidence" value="ECO:0007669"/>
    <property type="project" value="UniProtKB-UniPathway"/>
</dbReference>
<dbReference type="GO" id="GO:0015979">
    <property type="term" value="P:photosynthesis"/>
    <property type="evidence" value="ECO:0007669"/>
    <property type="project" value="UniProtKB-KW"/>
</dbReference>
<dbReference type="Gene3D" id="1.20.89.20">
    <property type="match status" value="1"/>
</dbReference>
<dbReference type="Gene3D" id="3.40.50.1980">
    <property type="entry name" value="Nitrogenase molybdenum iron protein domain"/>
    <property type="match status" value="1"/>
</dbReference>
<dbReference type="InterPro" id="IPR050152">
    <property type="entry name" value="ChlB/BchB/BchZ"/>
</dbReference>
<dbReference type="InterPro" id="IPR000510">
    <property type="entry name" value="Nase/OxRdtase_comp1"/>
</dbReference>
<dbReference type="PANTHER" id="PTHR33712">
    <property type="entry name" value="LIGHT-INDEPENDENT PROTOCHLOROPHYLLIDE REDUCTASE SUBUNIT B"/>
    <property type="match status" value="1"/>
</dbReference>
<dbReference type="PANTHER" id="PTHR33712:SF7">
    <property type="entry name" value="LIGHT-INDEPENDENT PROTOCHLOROPHYLLIDE REDUCTASE SUBUNIT B"/>
    <property type="match status" value="1"/>
</dbReference>
<dbReference type="Pfam" id="PF00148">
    <property type="entry name" value="Oxidored_nitro"/>
    <property type="match status" value="1"/>
</dbReference>
<dbReference type="SUPFAM" id="SSF53807">
    <property type="entry name" value="Helical backbone' metal receptor"/>
    <property type="match status" value="1"/>
</dbReference>
<geneLocation type="chloroplast"/>
<proteinExistence type="inferred from homology"/>
<gene>
    <name type="primary">chlB</name>
</gene>
<comment type="function">
    <text evidence="1">Component of the dark-operative protochlorophyllide reductase (DPOR) that uses Mg-ATP and reduced ferredoxin to reduce ring D of protochlorophyllide (Pchlide) to form chlorophyllide a (Chlide). This reaction is light-independent. The NB-protein (ChlN-ChlB) is the catalytic component of the complex (By similarity).</text>
</comment>
<comment type="catalytic activity">
    <reaction>
        <text>chlorophyllide a + oxidized 2[4Fe-4S]-[ferredoxin] + 2 ADP + 2 phosphate = protochlorophyllide a + reduced 2[4Fe-4S]-[ferredoxin] + 2 ATP + 2 H2O</text>
        <dbReference type="Rhea" id="RHEA:28202"/>
        <dbReference type="Rhea" id="RHEA-COMP:10002"/>
        <dbReference type="Rhea" id="RHEA-COMP:10004"/>
        <dbReference type="ChEBI" id="CHEBI:15377"/>
        <dbReference type="ChEBI" id="CHEBI:30616"/>
        <dbReference type="ChEBI" id="CHEBI:33722"/>
        <dbReference type="ChEBI" id="CHEBI:33723"/>
        <dbReference type="ChEBI" id="CHEBI:43474"/>
        <dbReference type="ChEBI" id="CHEBI:83348"/>
        <dbReference type="ChEBI" id="CHEBI:83350"/>
        <dbReference type="ChEBI" id="CHEBI:456216"/>
        <dbReference type="EC" id="1.3.7.7"/>
    </reaction>
</comment>
<comment type="cofactor">
    <cofactor evidence="1">
        <name>[4Fe-4S] cluster</name>
        <dbReference type="ChEBI" id="CHEBI:49883"/>
    </cofactor>
    <text evidence="1">Binds 1 [4Fe-4S] cluster per heterodimer. The cluster is bound at the heterodimer interface by residues from both subunits.</text>
</comment>
<comment type="pathway">
    <text>Porphyrin-containing compound metabolism; chlorophyll biosynthesis (light-independent).</text>
</comment>
<comment type="subunit">
    <text evidence="1">Protochlorophyllide reductase is composed of three subunits; ChlL, ChlN and ChlB. Forms a heterotetramer of two ChlB and two ChlN subunits (By similarity).</text>
</comment>
<comment type="subcellular location">
    <subcellularLocation>
        <location>Plastid</location>
        <location>Chloroplast</location>
    </subcellularLocation>
</comment>
<comment type="similarity">
    <text evidence="2">Belongs to the ChlB/BchB/BchZ family.</text>
</comment>